<evidence type="ECO:0000255" key="1">
    <source>
        <dbReference type="HAMAP-Rule" id="MF_00146"/>
    </source>
</evidence>
<evidence type="ECO:0000256" key="2">
    <source>
        <dbReference type="SAM" id="MobiDB-lite"/>
    </source>
</evidence>
<sequence length="193" mass="21236">MRLCDRDIEAWLDEGRLSITPRPPVERINGATVDVRLGNKFRTFRGHTAAFIDLSGPKDEVSAALDRVMSDEIVLPDGEAFYLHPGELALAVTFESVTLPPDLVGWLDGRSSLARLGLMVHVTAHRIDPGWSGCIVLEFYNSGKLPLALRPGMLIGALSFEPLSGPAARPYNRRQDAKYRDQQGAVASRIDKD</sequence>
<name>DCD_SALTY</name>
<gene>
    <name evidence="1" type="primary">dcd</name>
    <name type="ordered locus">STM2121</name>
</gene>
<comment type="function">
    <text evidence="1">Catalyzes the deamination of dCTP to dUTP.</text>
</comment>
<comment type="catalytic activity">
    <reaction evidence="1">
        <text>dCTP + H2O + H(+) = dUTP + NH4(+)</text>
        <dbReference type="Rhea" id="RHEA:22680"/>
        <dbReference type="ChEBI" id="CHEBI:15377"/>
        <dbReference type="ChEBI" id="CHEBI:15378"/>
        <dbReference type="ChEBI" id="CHEBI:28938"/>
        <dbReference type="ChEBI" id="CHEBI:61481"/>
        <dbReference type="ChEBI" id="CHEBI:61555"/>
        <dbReference type="EC" id="3.5.4.13"/>
    </reaction>
</comment>
<comment type="pathway">
    <text evidence="1">Pyrimidine metabolism; dUMP biosynthesis; dUMP from dCTP (dUTP route): step 1/2.</text>
</comment>
<comment type="subunit">
    <text evidence="1">Homotrimer.</text>
</comment>
<comment type="similarity">
    <text evidence="1">Belongs to the dCTP deaminase family.</text>
</comment>
<accession>P63905</accession>
<accession>Q8XFF8</accession>
<dbReference type="EC" id="3.5.4.13" evidence="1"/>
<dbReference type="EMBL" id="AE006468">
    <property type="protein sequence ID" value="AAL21025.1"/>
    <property type="molecule type" value="Genomic_DNA"/>
</dbReference>
<dbReference type="RefSeq" id="NP_461066.1">
    <property type="nucleotide sequence ID" value="NC_003197.2"/>
</dbReference>
<dbReference type="RefSeq" id="WP_001234783.1">
    <property type="nucleotide sequence ID" value="NC_003197.2"/>
</dbReference>
<dbReference type="SMR" id="P63905"/>
<dbReference type="STRING" id="99287.STM2121"/>
<dbReference type="PaxDb" id="99287-STM2121"/>
<dbReference type="GeneID" id="1253642"/>
<dbReference type="KEGG" id="stm:STM2121"/>
<dbReference type="PATRIC" id="fig|99287.12.peg.2244"/>
<dbReference type="HOGENOM" id="CLU_087476_2_0_6"/>
<dbReference type="OMA" id="PVESMMW"/>
<dbReference type="PhylomeDB" id="P63905"/>
<dbReference type="BioCyc" id="SENT99287:STM2121-MONOMER"/>
<dbReference type="UniPathway" id="UPA00610">
    <property type="reaction ID" value="UER00665"/>
</dbReference>
<dbReference type="Proteomes" id="UP000001014">
    <property type="component" value="Chromosome"/>
</dbReference>
<dbReference type="GO" id="GO:0008829">
    <property type="term" value="F:dCTP deaminase activity"/>
    <property type="evidence" value="ECO:0000318"/>
    <property type="project" value="GO_Central"/>
</dbReference>
<dbReference type="GO" id="GO:0000166">
    <property type="term" value="F:nucleotide binding"/>
    <property type="evidence" value="ECO:0007669"/>
    <property type="project" value="UniProtKB-KW"/>
</dbReference>
<dbReference type="GO" id="GO:0006226">
    <property type="term" value="P:dUMP biosynthetic process"/>
    <property type="evidence" value="ECO:0007669"/>
    <property type="project" value="UniProtKB-UniPathway"/>
</dbReference>
<dbReference type="GO" id="GO:0006229">
    <property type="term" value="P:dUTP biosynthetic process"/>
    <property type="evidence" value="ECO:0007669"/>
    <property type="project" value="UniProtKB-UniRule"/>
</dbReference>
<dbReference type="GO" id="GO:0015949">
    <property type="term" value="P:nucleobase-containing small molecule interconversion"/>
    <property type="evidence" value="ECO:0000318"/>
    <property type="project" value="GO_Central"/>
</dbReference>
<dbReference type="CDD" id="cd07557">
    <property type="entry name" value="trimeric_dUTPase"/>
    <property type="match status" value="1"/>
</dbReference>
<dbReference type="FunFam" id="2.70.40.10:FF:000003">
    <property type="entry name" value="dCTP deaminase"/>
    <property type="match status" value="1"/>
</dbReference>
<dbReference type="Gene3D" id="2.70.40.10">
    <property type="match status" value="1"/>
</dbReference>
<dbReference type="HAMAP" id="MF_00146">
    <property type="entry name" value="dCTP_deaminase"/>
    <property type="match status" value="1"/>
</dbReference>
<dbReference type="InterPro" id="IPR011962">
    <property type="entry name" value="dCTP_deaminase"/>
</dbReference>
<dbReference type="InterPro" id="IPR036157">
    <property type="entry name" value="dUTPase-like_sf"/>
</dbReference>
<dbReference type="InterPro" id="IPR033704">
    <property type="entry name" value="dUTPase_trimeric"/>
</dbReference>
<dbReference type="NCBIfam" id="TIGR02274">
    <property type="entry name" value="dCTP_deam"/>
    <property type="match status" value="1"/>
</dbReference>
<dbReference type="PANTHER" id="PTHR42680">
    <property type="entry name" value="DCTP DEAMINASE"/>
    <property type="match status" value="1"/>
</dbReference>
<dbReference type="PANTHER" id="PTHR42680:SF3">
    <property type="entry name" value="DCTP DEAMINASE"/>
    <property type="match status" value="1"/>
</dbReference>
<dbReference type="Pfam" id="PF22769">
    <property type="entry name" value="DCD"/>
    <property type="match status" value="1"/>
</dbReference>
<dbReference type="SUPFAM" id="SSF51283">
    <property type="entry name" value="dUTPase-like"/>
    <property type="match status" value="1"/>
</dbReference>
<feature type="chain" id="PRO_0000156010" description="dCTP deaminase">
    <location>
        <begin position="1"/>
        <end position="193"/>
    </location>
</feature>
<feature type="region of interest" description="Disordered" evidence="2">
    <location>
        <begin position="169"/>
        <end position="193"/>
    </location>
</feature>
<feature type="active site" description="Proton donor/acceptor" evidence="1">
    <location>
        <position position="138"/>
    </location>
</feature>
<feature type="binding site" evidence="1">
    <location>
        <begin position="110"/>
        <end position="115"/>
    </location>
    <ligand>
        <name>dCTP</name>
        <dbReference type="ChEBI" id="CHEBI:61481"/>
    </ligand>
</feature>
<feature type="binding site" evidence="1">
    <location>
        <position position="128"/>
    </location>
    <ligand>
        <name>dCTP</name>
        <dbReference type="ChEBI" id="CHEBI:61481"/>
    </ligand>
</feature>
<feature type="binding site" evidence="1">
    <location>
        <begin position="136"/>
        <end position="138"/>
    </location>
    <ligand>
        <name>dCTP</name>
        <dbReference type="ChEBI" id="CHEBI:61481"/>
    </ligand>
</feature>
<feature type="binding site" evidence="1">
    <location>
        <position position="171"/>
    </location>
    <ligand>
        <name>dCTP</name>
        <dbReference type="ChEBI" id="CHEBI:61481"/>
    </ligand>
</feature>
<feature type="binding site" evidence="1">
    <location>
        <position position="178"/>
    </location>
    <ligand>
        <name>dCTP</name>
        <dbReference type="ChEBI" id="CHEBI:61481"/>
    </ligand>
</feature>
<feature type="binding site" evidence="1">
    <location>
        <position position="182"/>
    </location>
    <ligand>
        <name>dCTP</name>
        <dbReference type="ChEBI" id="CHEBI:61481"/>
    </ligand>
</feature>
<protein>
    <recommendedName>
        <fullName evidence="1">dCTP deaminase</fullName>
        <ecNumber evidence="1">3.5.4.13</ecNumber>
    </recommendedName>
    <alternativeName>
        <fullName evidence="1">Deoxycytidine triphosphate deaminase</fullName>
    </alternativeName>
</protein>
<proteinExistence type="inferred from homology"/>
<reference key="1">
    <citation type="journal article" date="2001" name="Nature">
        <title>Complete genome sequence of Salmonella enterica serovar Typhimurium LT2.</title>
        <authorList>
            <person name="McClelland M."/>
            <person name="Sanderson K.E."/>
            <person name="Spieth J."/>
            <person name="Clifton S.W."/>
            <person name="Latreille P."/>
            <person name="Courtney L."/>
            <person name="Porwollik S."/>
            <person name="Ali J."/>
            <person name="Dante M."/>
            <person name="Du F."/>
            <person name="Hou S."/>
            <person name="Layman D."/>
            <person name="Leonard S."/>
            <person name="Nguyen C."/>
            <person name="Scott K."/>
            <person name="Holmes A."/>
            <person name="Grewal N."/>
            <person name="Mulvaney E."/>
            <person name="Ryan E."/>
            <person name="Sun H."/>
            <person name="Florea L."/>
            <person name="Miller W."/>
            <person name="Stoneking T."/>
            <person name="Nhan M."/>
            <person name="Waterston R."/>
            <person name="Wilson R.K."/>
        </authorList>
    </citation>
    <scope>NUCLEOTIDE SEQUENCE [LARGE SCALE GENOMIC DNA]</scope>
    <source>
        <strain>LT2 / SGSC1412 / ATCC 700720</strain>
    </source>
</reference>
<keyword id="KW-0378">Hydrolase</keyword>
<keyword id="KW-0546">Nucleotide metabolism</keyword>
<keyword id="KW-0547">Nucleotide-binding</keyword>
<keyword id="KW-1185">Reference proteome</keyword>
<organism>
    <name type="scientific">Salmonella typhimurium (strain LT2 / SGSC1412 / ATCC 700720)</name>
    <dbReference type="NCBI Taxonomy" id="99287"/>
    <lineage>
        <taxon>Bacteria</taxon>
        <taxon>Pseudomonadati</taxon>
        <taxon>Pseudomonadota</taxon>
        <taxon>Gammaproteobacteria</taxon>
        <taxon>Enterobacterales</taxon>
        <taxon>Enterobacteriaceae</taxon>
        <taxon>Salmonella</taxon>
    </lineage>
</organism>